<protein>
    <recommendedName>
        <fullName>Protein NDR1</fullName>
    </recommendedName>
    <alternativeName>
        <fullName>Non-race specific disease resistance protein 1</fullName>
        <shortName>AtNDR1</shortName>
    </alternativeName>
</protein>
<name>NDR1_ARATH</name>
<gene>
    <name type="primary">NDR1</name>
    <name type="ordered locus">At3g20600</name>
    <name type="ORF">K10D20.24</name>
</gene>
<proteinExistence type="evidence at protein level"/>
<feature type="signal peptide" evidence="1">
    <location>
        <begin position="1"/>
        <end position="38"/>
    </location>
</feature>
<feature type="chain" id="PRO_0000403652" description="Protein NDR1">
    <location>
        <begin position="39"/>
        <end position="195"/>
    </location>
</feature>
<feature type="propeptide" id="PRO_0000403653" description="Removed in mature form" evidence="1">
    <location>
        <begin position="196"/>
        <end position="219"/>
    </location>
</feature>
<feature type="lipid moiety-binding region" description="GPI-anchor amidated aspartate" evidence="1">
    <location>
        <position position="195"/>
    </location>
</feature>
<feature type="glycosylation site" description="N-linked (GlcNAc...) asparagine" evidence="1">
    <location>
        <position position="62"/>
    </location>
</feature>
<feature type="glycosylation site" description="N-linked (GlcNAc...) asparagine" evidence="1">
    <location>
        <position position="88"/>
    </location>
</feature>
<feature type="glycosylation site" description="N-linked (GlcNAc...) asparagine" evidence="1">
    <location>
        <position position="93"/>
    </location>
</feature>
<feature type="glycosylation site" description="N-linked (GlcNAc...) asparagine" evidence="1">
    <location>
        <position position="98"/>
    </location>
</feature>
<feature type="glycosylation site" description="N-linked (GlcNAc...) asparagine" evidence="1">
    <location>
        <position position="107"/>
    </location>
</feature>
<feature type="glycosylation site" description="N-linked (GlcNAc...) asparagine" evidence="1">
    <location>
        <position position="132"/>
    </location>
</feature>
<feature type="glycosylation site" description="N-linked (GlcNAc...) asparagine" evidence="1">
    <location>
        <position position="142"/>
    </location>
</feature>
<feature type="mutagenesis site" description="No effect on the interaction with RIN4." evidence="6">
    <original>M</original>
    <variation>A</variation>
    <location>
        <position position="1"/>
    </location>
</feature>
<feature type="mutagenesis site" description="No effect on the interaction with RIN4." evidence="6">
    <original>N</original>
    <variation>A</variation>
    <location>
        <position position="2"/>
    </location>
</feature>
<feature type="mutagenesis site" description="No effect on the interaction with RIN4." evidence="6">
    <original>N</original>
    <variation>A</variation>
    <location>
        <position position="3"/>
    </location>
</feature>
<feature type="mutagenesis site" description="Loss of interaction with RIN4." evidence="6">
    <original>Q</original>
    <variation>A</variation>
    <location>
        <position position="4"/>
    </location>
</feature>
<feature type="mutagenesis site" description="Loss of interaction with RIN4." evidence="6">
    <original>N</original>
    <variation>A</variation>
    <location>
        <position position="5"/>
    </location>
</feature>
<feature type="mutagenesis site" description="No effect on the interaction with RIN4." evidence="6">
    <original>E</original>
    <variation>A</variation>
    <location>
        <position position="6"/>
    </location>
</feature>
<feature type="mutagenesis site" description="No effect on the interaction with RIN4." evidence="6">
    <original>D</original>
    <variation>A</variation>
    <location>
        <position position="7"/>
    </location>
</feature>
<feature type="mutagenesis site" description="No effect on the interaction with RIN4." evidence="6">
    <original>T</original>
    <variation>A</variation>
    <location>
        <position position="8"/>
    </location>
</feature>
<organism>
    <name type="scientific">Arabidopsis thaliana</name>
    <name type="common">Mouse-ear cress</name>
    <dbReference type="NCBI Taxonomy" id="3702"/>
    <lineage>
        <taxon>Eukaryota</taxon>
        <taxon>Viridiplantae</taxon>
        <taxon>Streptophyta</taxon>
        <taxon>Embryophyta</taxon>
        <taxon>Tracheophyta</taxon>
        <taxon>Spermatophyta</taxon>
        <taxon>Magnoliopsida</taxon>
        <taxon>eudicotyledons</taxon>
        <taxon>Gunneridae</taxon>
        <taxon>Pentapetalae</taxon>
        <taxon>rosids</taxon>
        <taxon>malvids</taxon>
        <taxon>Brassicales</taxon>
        <taxon>Brassicaceae</taxon>
        <taxon>Camelineae</taxon>
        <taxon>Arabidopsis</taxon>
    </lineage>
</organism>
<accession>O48915</accession>
<sequence length="219" mass="24674">MNNQNEDTEGGRNCCTCCLSFIFTAGLTSLFLWLSLRADKPKCSIQNFFIPALGKDPNSRDNTTLNFMVRCDNPNKDKGIYYDDVHLNFSTINTTKINSSALVLVGNYTVPKFYQGHKKKAKKWGQVKPLNNQTVLRAVLPNGSAVFRLDLKTQVRFKIVFWKTKRYGVEVGADVEVNGDGVKAQKKGIKMKKSDSSFPLRSSFPISVLMNLLVFFAIR</sequence>
<comment type="function">
    <text evidence="2 3 4 5 6">Involved in disease resistance. Required for resistance conferred by multiple R genes recognizing different bacterial and oomycete pathogen isolates like avirulent P.syringae or H.parasitica (downy mildew). Required for the establishment of hypersensitive response (HR) and systemic acquired resistance (SAR) after infection with the bacterial pathogen P.syringae DC3000 carrying avrRpt2. Required for resistance to the soilborne fungus V.longisporum. Interaction with RIN4 is required for the activation of the R gene RPS2 and RPS2-mediated resistance.</text>
</comment>
<comment type="subunit">
    <text evidence="6">Interacts with RIN4 (via C-terminus).</text>
</comment>
<comment type="interaction">
    <interactant intactId="EBI-2314492">
        <id>O48915</id>
    </interactant>
    <interactant intactId="EBI-2270391">
        <id>Q8GYN5</id>
        <label>RIN4</label>
    </interactant>
    <organismsDiffer>false</organismsDiffer>
    <experiments>3</experiments>
</comment>
<comment type="subcellular location">
    <subcellularLocation>
        <location evidence="7">Cell membrane</location>
        <topology evidence="7">Lipid-anchor</topology>
        <topology evidence="7">GPI-anchor</topology>
    </subcellularLocation>
</comment>
<comment type="PTM">
    <text evidence="4">N-glycosylated.</text>
</comment>
<comment type="disruption phenotype">
    <text evidence="2">No visible phenotype under normal growth condition. In case of infection, plants loose R gene resistance mediated by RPM1, RPS2, RPS5. Plants overexpressing NDR1 show enhanced resistance against the virulent strain of the bacterial pathogen Pst DC3000.</text>
</comment>
<reference key="1">
    <citation type="journal article" date="1997" name="Science">
        <title>NDR1, a pathogen-induced component required for Arabidopsis disease resistance.</title>
        <authorList>
            <person name="Century K.S."/>
            <person name="Shapiro A.D."/>
            <person name="Repetti P.P."/>
            <person name="Dahlbeck D."/>
            <person name="Holub E."/>
            <person name="Staskawicz B.J."/>
        </authorList>
    </citation>
    <scope>NUCLEOTIDE SEQUENCE [GENOMIC DNA]</scope>
    <scope>INDUCTION</scope>
</reference>
<reference key="2">
    <citation type="journal article" date="2009" name="Genetics">
        <title>Arabidopsis thaliana genes encoding defense signaling and recognition proteins exhibit contrasting evolutionary dynamics.</title>
        <authorList>
            <person name="Caldwell K.S."/>
            <person name="Michelmore R.W."/>
        </authorList>
    </citation>
    <scope>NUCLEOTIDE SEQUENCE [GENOMIC DNA]</scope>
    <source>
        <strain>cv. Aa-0</strain>
        <strain>cv. Columbia</strain>
        <strain>cv. Ei-2</strain>
        <strain>cv. Nd-1</strain>
    </source>
</reference>
<reference key="3">
    <citation type="journal article" date="2000" name="DNA Res.">
        <title>Structural analysis of Arabidopsis thaliana chromosome 3. II. Sequence features of the 4,251,695 bp regions covered by 90 P1, TAC and BAC clones.</title>
        <authorList>
            <person name="Kaneko T."/>
            <person name="Katoh T."/>
            <person name="Sato S."/>
            <person name="Nakamura Y."/>
            <person name="Asamizu E."/>
            <person name="Tabata S."/>
        </authorList>
    </citation>
    <scope>NUCLEOTIDE SEQUENCE [LARGE SCALE GENOMIC DNA]</scope>
    <source>
        <strain>cv. Columbia</strain>
    </source>
</reference>
<reference key="4">
    <citation type="journal article" date="2017" name="Plant J.">
        <title>Araport11: a complete reannotation of the Arabidopsis thaliana reference genome.</title>
        <authorList>
            <person name="Cheng C.Y."/>
            <person name="Krishnakumar V."/>
            <person name="Chan A.P."/>
            <person name="Thibaud-Nissen F."/>
            <person name="Schobel S."/>
            <person name="Town C.D."/>
        </authorList>
    </citation>
    <scope>GENOME REANNOTATION</scope>
    <source>
        <strain>cv. Columbia</strain>
    </source>
</reference>
<reference key="5">
    <citation type="journal article" date="2003" name="Science">
        <title>Empirical analysis of transcriptional activity in the Arabidopsis genome.</title>
        <authorList>
            <person name="Yamada K."/>
            <person name="Lim J."/>
            <person name="Dale J.M."/>
            <person name="Chen H."/>
            <person name="Shinn P."/>
            <person name="Palm C.J."/>
            <person name="Southwick A.M."/>
            <person name="Wu H.C."/>
            <person name="Kim C.J."/>
            <person name="Nguyen M."/>
            <person name="Pham P.K."/>
            <person name="Cheuk R.F."/>
            <person name="Karlin-Newmann G."/>
            <person name="Liu S.X."/>
            <person name="Lam B."/>
            <person name="Sakano H."/>
            <person name="Wu T."/>
            <person name="Yu G."/>
            <person name="Miranda M."/>
            <person name="Quach H.L."/>
            <person name="Tripp M."/>
            <person name="Chang C.H."/>
            <person name="Lee J.M."/>
            <person name="Toriumi M.J."/>
            <person name="Chan M.M."/>
            <person name="Tang C.C."/>
            <person name="Onodera C.S."/>
            <person name="Deng J.M."/>
            <person name="Akiyama K."/>
            <person name="Ansari Y."/>
            <person name="Arakawa T."/>
            <person name="Banh J."/>
            <person name="Banno F."/>
            <person name="Bowser L."/>
            <person name="Brooks S.Y."/>
            <person name="Carninci P."/>
            <person name="Chao Q."/>
            <person name="Choy N."/>
            <person name="Enju A."/>
            <person name="Goldsmith A.D."/>
            <person name="Gurjal M."/>
            <person name="Hansen N.F."/>
            <person name="Hayashizaki Y."/>
            <person name="Johnson-Hopson C."/>
            <person name="Hsuan V.W."/>
            <person name="Iida K."/>
            <person name="Karnes M."/>
            <person name="Khan S."/>
            <person name="Koesema E."/>
            <person name="Ishida J."/>
            <person name="Jiang P.X."/>
            <person name="Jones T."/>
            <person name="Kawai J."/>
            <person name="Kamiya A."/>
            <person name="Meyers C."/>
            <person name="Nakajima M."/>
            <person name="Narusaka M."/>
            <person name="Seki M."/>
            <person name="Sakurai T."/>
            <person name="Satou M."/>
            <person name="Tamse R."/>
            <person name="Vaysberg M."/>
            <person name="Wallender E.K."/>
            <person name="Wong C."/>
            <person name="Yamamura Y."/>
            <person name="Yuan S."/>
            <person name="Shinozaki K."/>
            <person name="Davis R.W."/>
            <person name="Theologis A."/>
            <person name="Ecker J.R."/>
        </authorList>
    </citation>
    <scope>NUCLEOTIDE SEQUENCE [LARGE SCALE MRNA]</scope>
    <source>
        <strain>cv. Columbia</strain>
    </source>
</reference>
<reference key="6">
    <citation type="journal article" date="1995" name="Proc. Natl. Acad. Sci. U.S.A.">
        <title>NDR1, a locus of Arabidopsis thaliana that is required for disease resistance to both a bacterial and a fungal pathogen.</title>
        <authorList>
            <person name="Century K.S."/>
            <person name="Holub E.B."/>
            <person name="Staskawicz B.J."/>
        </authorList>
    </citation>
    <scope>FUNCTION</scope>
    <scope>DISRUPTION PHENOTYPE</scope>
</reference>
<reference key="7">
    <citation type="journal article" date="2001" name="Plant Physiol.">
        <title>The role of NDR1 in avirulence gene-directed signaling and control of programmed cell death in Arabidopsis.</title>
        <authorList>
            <person name="Shapiro A.D."/>
            <person name="Zhang C."/>
        </authorList>
    </citation>
    <scope>FUNCTION</scope>
</reference>
<reference key="8">
    <citation type="journal article" date="2004" name="Plant J.">
        <title>Overexpression of the plasma membrane-localized NDR1 protein results in enhanced bacterial disease resistance in Arabidopsis thaliana.</title>
        <authorList>
            <person name="Coppinger P."/>
            <person name="Repetti P.P."/>
            <person name="Day B."/>
            <person name="Dahlbeck D."/>
            <person name="Mehlert A."/>
            <person name="Staskawicz B.J."/>
        </authorList>
    </citation>
    <scope>FUNCTION</scope>
    <scope>SUBCELLULAR LOCATION</scope>
    <scope>GPI-ANCHOR</scope>
    <scope>GLYCOSYLATION</scope>
</reference>
<reference key="9">
    <citation type="journal article" date="2006" name="Mol. Plant Microbe Interact.">
        <title>Early responses in the Arabidopsis-Verticillium longisporum pathosystem are dependent on NDR1, JA- and ET-associated signals via cytosolic NPR1 and RFO1.</title>
        <authorList>
            <person name="Johansson A."/>
            <person name="Staal J."/>
            <person name="Dixelius C."/>
        </authorList>
    </citation>
    <scope>FUNCTION</scope>
</reference>
<reference key="10">
    <citation type="journal article" date="2006" name="Plant Cell">
        <title>NDR1 interaction with RIN4 mediates the differential activation of multiple disease resistance pathways in Arabidopsis.</title>
        <authorList>
            <person name="Day B."/>
            <person name="Dahlbeck D."/>
            <person name="Staskawicz B.J."/>
        </authorList>
    </citation>
    <scope>FUNCTION</scope>
    <scope>INTERACTION WITH RIN4</scope>
    <scope>MUTAGENESIS OF MET-1; ASN-2; ASN-3; GLN-4; ASN-5; GLU-6; ASP-7 AND THR-8</scope>
</reference>
<evidence type="ECO:0000255" key="1"/>
<evidence type="ECO:0000269" key="2">
    <source>
    </source>
</evidence>
<evidence type="ECO:0000269" key="3">
    <source>
    </source>
</evidence>
<evidence type="ECO:0000269" key="4">
    <source>
    </source>
</evidence>
<evidence type="ECO:0000269" key="5">
    <source>
    </source>
</evidence>
<evidence type="ECO:0000269" key="6">
    <source>
    </source>
</evidence>
<evidence type="ECO:0000305" key="7">
    <source>
    </source>
</evidence>
<dbReference type="EMBL" id="AF021346">
    <property type="protein sequence ID" value="AAB95208.1"/>
    <property type="molecule type" value="Genomic_DNA"/>
</dbReference>
<dbReference type="EMBL" id="EF470696">
    <property type="protein sequence ID" value="ABR45925.1"/>
    <property type="molecule type" value="Genomic_DNA"/>
</dbReference>
<dbReference type="EMBL" id="EF470697">
    <property type="protein sequence ID" value="ABR45926.1"/>
    <property type="molecule type" value="Genomic_DNA"/>
</dbReference>
<dbReference type="EMBL" id="EF470704">
    <property type="protein sequence ID" value="ABR45933.1"/>
    <property type="molecule type" value="Genomic_DNA"/>
</dbReference>
<dbReference type="EMBL" id="EF470706">
    <property type="protein sequence ID" value="ABR45935.1"/>
    <property type="molecule type" value="Genomic_DNA"/>
</dbReference>
<dbReference type="EMBL" id="AP000410">
    <property type="protein sequence ID" value="BAB01168.1"/>
    <property type="molecule type" value="Genomic_DNA"/>
</dbReference>
<dbReference type="EMBL" id="CP002686">
    <property type="protein sequence ID" value="AEE76402.1"/>
    <property type="molecule type" value="Genomic_DNA"/>
</dbReference>
<dbReference type="EMBL" id="BT002004">
    <property type="protein sequence ID" value="AAN72015.1"/>
    <property type="molecule type" value="mRNA"/>
</dbReference>
<dbReference type="EMBL" id="BT006267">
    <property type="protein sequence ID" value="AAP13375.1"/>
    <property type="molecule type" value="mRNA"/>
</dbReference>
<dbReference type="RefSeq" id="NP_188696.1">
    <property type="nucleotide sequence ID" value="NM_112952.4"/>
</dbReference>
<dbReference type="BioGRID" id="6939">
    <property type="interactions" value="2"/>
</dbReference>
<dbReference type="FunCoup" id="O48915">
    <property type="interactions" value="81"/>
</dbReference>
<dbReference type="IntAct" id="O48915">
    <property type="interactions" value="1"/>
</dbReference>
<dbReference type="STRING" id="3702.O48915"/>
<dbReference type="GlyCosmos" id="O48915">
    <property type="glycosylation" value="7 sites, No reported glycans"/>
</dbReference>
<dbReference type="GlyGen" id="O48915">
    <property type="glycosylation" value="7 sites"/>
</dbReference>
<dbReference type="PaxDb" id="3702-AT3G20600.1"/>
<dbReference type="ProteomicsDB" id="251185"/>
<dbReference type="DNASU" id="821607"/>
<dbReference type="EnsemblPlants" id="AT3G20600.1">
    <property type="protein sequence ID" value="AT3G20600.1"/>
    <property type="gene ID" value="AT3G20600"/>
</dbReference>
<dbReference type="GeneID" id="821607"/>
<dbReference type="Gramene" id="AT3G20600.1">
    <property type="protein sequence ID" value="AT3G20600.1"/>
    <property type="gene ID" value="AT3G20600"/>
</dbReference>
<dbReference type="KEGG" id="ath:AT3G20600"/>
<dbReference type="Araport" id="AT3G20600"/>
<dbReference type="TAIR" id="AT3G20600">
    <property type="gene designation" value="NDR1"/>
</dbReference>
<dbReference type="eggNOG" id="ENOG502RZ5H">
    <property type="taxonomic scope" value="Eukaryota"/>
</dbReference>
<dbReference type="HOGENOM" id="CLU_107779_0_0_1"/>
<dbReference type="InParanoid" id="O48915"/>
<dbReference type="OMA" id="KSMAPRM"/>
<dbReference type="PhylomeDB" id="O48915"/>
<dbReference type="PRO" id="PR:O48915"/>
<dbReference type="Proteomes" id="UP000006548">
    <property type="component" value="Chromosome 3"/>
</dbReference>
<dbReference type="ExpressionAtlas" id="O48915">
    <property type="expression patterns" value="baseline and differential"/>
</dbReference>
<dbReference type="GO" id="GO:0016020">
    <property type="term" value="C:membrane"/>
    <property type="evidence" value="ECO:0000250"/>
    <property type="project" value="TAIR"/>
</dbReference>
<dbReference type="GO" id="GO:0005886">
    <property type="term" value="C:plasma membrane"/>
    <property type="evidence" value="ECO:0000314"/>
    <property type="project" value="UniProtKB"/>
</dbReference>
<dbReference type="GO" id="GO:0098552">
    <property type="term" value="C:side of membrane"/>
    <property type="evidence" value="ECO:0007669"/>
    <property type="project" value="UniProtKB-KW"/>
</dbReference>
<dbReference type="GO" id="GO:0042742">
    <property type="term" value="P:defense response to bacterium"/>
    <property type="evidence" value="ECO:0000315"/>
    <property type="project" value="UniProtKB"/>
</dbReference>
<dbReference type="GO" id="GO:0050832">
    <property type="term" value="P:defense response to fungus"/>
    <property type="evidence" value="ECO:0000315"/>
    <property type="project" value="TAIR"/>
</dbReference>
<dbReference type="GO" id="GO:0098542">
    <property type="term" value="P:defense response to other organism"/>
    <property type="evidence" value="ECO:0000315"/>
    <property type="project" value="TAIR"/>
</dbReference>
<dbReference type="GO" id="GO:0009626">
    <property type="term" value="P:plant-type hypersensitive response"/>
    <property type="evidence" value="ECO:0000315"/>
    <property type="project" value="UniProtKB"/>
</dbReference>
<dbReference type="InterPro" id="IPR044839">
    <property type="entry name" value="NDR1-like"/>
</dbReference>
<dbReference type="PANTHER" id="PTHR31415:SF52">
    <property type="entry name" value="LATE EMBRYOGENESIS ABUNDANT (LEA) HYDROXYPROLINE-RICH GLYCOPROTEIN FAMILY-RELATED"/>
    <property type="match status" value="1"/>
</dbReference>
<dbReference type="PANTHER" id="PTHR31415">
    <property type="entry name" value="OS05G0367900 PROTEIN"/>
    <property type="match status" value="1"/>
</dbReference>
<keyword id="KW-1003">Cell membrane</keyword>
<keyword id="KW-0325">Glycoprotein</keyword>
<keyword id="KW-0336">GPI-anchor</keyword>
<keyword id="KW-0381">Hypersensitive response</keyword>
<keyword id="KW-0391">Immunity</keyword>
<keyword id="KW-0399">Innate immunity</keyword>
<keyword id="KW-0449">Lipoprotein</keyword>
<keyword id="KW-0472">Membrane</keyword>
<keyword id="KW-0611">Plant defense</keyword>
<keyword id="KW-0654">Proteoglycan</keyword>
<keyword id="KW-1185">Reference proteome</keyword>
<keyword id="KW-0732">Signal</keyword>